<protein>
    <recommendedName>
        <fullName evidence="1">2-C-methyl-D-erythritol 2,4-cyclodiphosphate synthase</fullName>
        <shortName evidence="1">MECDP-synthase</shortName>
        <shortName evidence="1">MECPP-synthase</shortName>
        <shortName evidence="1">MECPS</shortName>
        <ecNumber evidence="1">4.6.1.12</ecNumber>
    </recommendedName>
</protein>
<comment type="function">
    <text evidence="1">Involved in the biosynthesis of isopentenyl diphosphate (IPP) and dimethylallyl diphosphate (DMAPP), two major building blocks of isoprenoid compounds. Catalyzes the conversion of 4-diphosphocytidyl-2-C-methyl-D-erythritol 2-phosphate (CDP-ME2P) to 2-C-methyl-D-erythritol 2,4-cyclodiphosphate (ME-CPP) with a corresponding release of cytidine 5-monophosphate (CMP).</text>
</comment>
<comment type="catalytic activity">
    <reaction evidence="1">
        <text>4-CDP-2-C-methyl-D-erythritol 2-phosphate = 2-C-methyl-D-erythritol 2,4-cyclic diphosphate + CMP</text>
        <dbReference type="Rhea" id="RHEA:23864"/>
        <dbReference type="ChEBI" id="CHEBI:57919"/>
        <dbReference type="ChEBI" id="CHEBI:58483"/>
        <dbReference type="ChEBI" id="CHEBI:60377"/>
        <dbReference type="EC" id="4.6.1.12"/>
    </reaction>
</comment>
<comment type="cofactor">
    <cofactor evidence="1">
        <name>a divalent metal cation</name>
        <dbReference type="ChEBI" id="CHEBI:60240"/>
    </cofactor>
    <text evidence="1">Binds 1 divalent metal cation per subunit.</text>
</comment>
<comment type="pathway">
    <text evidence="1">Isoprenoid biosynthesis; isopentenyl diphosphate biosynthesis via DXP pathway; isopentenyl diphosphate from 1-deoxy-D-xylulose 5-phosphate: step 4/6.</text>
</comment>
<comment type="subunit">
    <text evidence="1">Homotrimer.</text>
</comment>
<comment type="similarity">
    <text evidence="1">Belongs to the IspF family.</text>
</comment>
<name>ISPF_SHESM</name>
<feature type="chain" id="PRO_1000022883" description="2-C-methyl-D-erythritol 2,4-cyclodiphosphate synthase">
    <location>
        <begin position="1"/>
        <end position="159"/>
    </location>
</feature>
<feature type="binding site" evidence="1">
    <location>
        <begin position="10"/>
        <end position="12"/>
    </location>
    <ligand>
        <name>4-CDP-2-C-methyl-D-erythritol 2-phosphate</name>
        <dbReference type="ChEBI" id="CHEBI:57919"/>
    </ligand>
</feature>
<feature type="binding site" evidence="1">
    <location>
        <position position="10"/>
    </location>
    <ligand>
        <name>a divalent metal cation</name>
        <dbReference type="ChEBI" id="CHEBI:60240"/>
    </ligand>
</feature>
<feature type="binding site" evidence="1">
    <location>
        <position position="12"/>
    </location>
    <ligand>
        <name>a divalent metal cation</name>
        <dbReference type="ChEBI" id="CHEBI:60240"/>
    </ligand>
</feature>
<feature type="binding site" evidence="1">
    <location>
        <begin position="36"/>
        <end position="37"/>
    </location>
    <ligand>
        <name>4-CDP-2-C-methyl-D-erythritol 2-phosphate</name>
        <dbReference type="ChEBI" id="CHEBI:57919"/>
    </ligand>
</feature>
<feature type="binding site" evidence="1">
    <location>
        <position position="44"/>
    </location>
    <ligand>
        <name>a divalent metal cation</name>
        <dbReference type="ChEBI" id="CHEBI:60240"/>
    </ligand>
</feature>
<feature type="binding site" evidence="1">
    <location>
        <begin position="58"/>
        <end position="60"/>
    </location>
    <ligand>
        <name>4-CDP-2-C-methyl-D-erythritol 2-phosphate</name>
        <dbReference type="ChEBI" id="CHEBI:57919"/>
    </ligand>
</feature>
<feature type="binding site" evidence="1">
    <location>
        <begin position="63"/>
        <end position="67"/>
    </location>
    <ligand>
        <name>4-CDP-2-C-methyl-D-erythritol 2-phosphate</name>
        <dbReference type="ChEBI" id="CHEBI:57919"/>
    </ligand>
</feature>
<feature type="binding site" evidence="1">
    <location>
        <begin position="102"/>
        <end position="108"/>
    </location>
    <ligand>
        <name>4-CDP-2-C-methyl-D-erythritol 2-phosphate</name>
        <dbReference type="ChEBI" id="CHEBI:57919"/>
    </ligand>
</feature>
<feature type="binding site" evidence="1">
    <location>
        <begin position="134"/>
        <end position="137"/>
    </location>
    <ligand>
        <name>4-CDP-2-C-methyl-D-erythritol 2-phosphate</name>
        <dbReference type="ChEBI" id="CHEBI:57919"/>
    </ligand>
</feature>
<feature type="binding site" evidence="1">
    <location>
        <position position="141"/>
    </location>
    <ligand>
        <name>4-CDP-2-C-methyl-D-erythritol 2-phosphate</name>
        <dbReference type="ChEBI" id="CHEBI:57919"/>
    </ligand>
</feature>
<feature type="binding site" evidence="1">
    <location>
        <position position="144"/>
    </location>
    <ligand>
        <name>4-CDP-2-C-methyl-D-erythritol 2-phosphate</name>
        <dbReference type="ChEBI" id="CHEBI:57919"/>
    </ligand>
</feature>
<feature type="site" description="Transition state stabilizer" evidence="1">
    <location>
        <position position="36"/>
    </location>
</feature>
<feature type="site" description="Transition state stabilizer" evidence="1">
    <location>
        <position position="135"/>
    </location>
</feature>
<sequence>MKIRIGHGFDVHKFGEARPLILCGVEVPYETGLVAHSDGDVVLHAISDAILGAMALGDIGKHFPDTDAAYKGADSRVLLRHCYALARAKGFELGNLDVTIIAQAPKMAPHIEDMRQVLAADLNADIADINVKATTTEKLGFTGRKEGIAVEAVVLLSRQ</sequence>
<proteinExistence type="inferred from homology"/>
<organism>
    <name type="scientific">Shewanella sp. (strain MR-4)</name>
    <dbReference type="NCBI Taxonomy" id="60480"/>
    <lineage>
        <taxon>Bacteria</taxon>
        <taxon>Pseudomonadati</taxon>
        <taxon>Pseudomonadota</taxon>
        <taxon>Gammaproteobacteria</taxon>
        <taxon>Alteromonadales</taxon>
        <taxon>Shewanellaceae</taxon>
        <taxon>Shewanella</taxon>
    </lineage>
</organism>
<dbReference type="EC" id="4.6.1.12" evidence="1"/>
<dbReference type="EMBL" id="CP000446">
    <property type="protein sequence ID" value="ABI38198.1"/>
    <property type="molecule type" value="Genomic_DNA"/>
</dbReference>
<dbReference type="RefSeq" id="WP_011621907.1">
    <property type="nucleotide sequence ID" value="NC_008321.1"/>
</dbReference>
<dbReference type="SMR" id="Q0HL69"/>
<dbReference type="GeneID" id="75187809"/>
<dbReference type="KEGG" id="she:Shewmr4_1118"/>
<dbReference type="HOGENOM" id="CLU_084630_2_0_6"/>
<dbReference type="UniPathway" id="UPA00056">
    <property type="reaction ID" value="UER00095"/>
</dbReference>
<dbReference type="GO" id="GO:0008685">
    <property type="term" value="F:2-C-methyl-D-erythritol 2,4-cyclodiphosphate synthase activity"/>
    <property type="evidence" value="ECO:0007669"/>
    <property type="project" value="UniProtKB-UniRule"/>
</dbReference>
<dbReference type="GO" id="GO:0046872">
    <property type="term" value="F:metal ion binding"/>
    <property type="evidence" value="ECO:0007669"/>
    <property type="project" value="UniProtKB-KW"/>
</dbReference>
<dbReference type="GO" id="GO:0019288">
    <property type="term" value="P:isopentenyl diphosphate biosynthetic process, methylerythritol 4-phosphate pathway"/>
    <property type="evidence" value="ECO:0007669"/>
    <property type="project" value="UniProtKB-UniRule"/>
</dbReference>
<dbReference type="GO" id="GO:0016114">
    <property type="term" value="P:terpenoid biosynthetic process"/>
    <property type="evidence" value="ECO:0007669"/>
    <property type="project" value="InterPro"/>
</dbReference>
<dbReference type="CDD" id="cd00554">
    <property type="entry name" value="MECDP_synthase"/>
    <property type="match status" value="1"/>
</dbReference>
<dbReference type="FunFam" id="3.30.1330.50:FF:000001">
    <property type="entry name" value="2-C-methyl-D-erythritol 2,4-cyclodiphosphate synthase"/>
    <property type="match status" value="1"/>
</dbReference>
<dbReference type="Gene3D" id="3.30.1330.50">
    <property type="entry name" value="2-C-methyl-D-erythritol 2,4-cyclodiphosphate synthase"/>
    <property type="match status" value="1"/>
</dbReference>
<dbReference type="HAMAP" id="MF_00107">
    <property type="entry name" value="IspF"/>
    <property type="match status" value="1"/>
</dbReference>
<dbReference type="InterPro" id="IPR003526">
    <property type="entry name" value="MECDP_synthase"/>
</dbReference>
<dbReference type="InterPro" id="IPR020555">
    <property type="entry name" value="MECDP_synthase_CS"/>
</dbReference>
<dbReference type="InterPro" id="IPR036571">
    <property type="entry name" value="MECDP_synthase_sf"/>
</dbReference>
<dbReference type="NCBIfam" id="TIGR00151">
    <property type="entry name" value="ispF"/>
    <property type="match status" value="1"/>
</dbReference>
<dbReference type="PANTHER" id="PTHR43181">
    <property type="entry name" value="2-C-METHYL-D-ERYTHRITOL 2,4-CYCLODIPHOSPHATE SYNTHASE, CHLOROPLASTIC"/>
    <property type="match status" value="1"/>
</dbReference>
<dbReference type="PANTHER" id="PTHR43181:SF1">
    <property type="entry name" value="2-C-METHYL-D-ERYTHRITOL 2,4-CYCLODIPHOSPHATE SYNTHASE, CHLOROPLASTIC"/>
    <property type="match status" value="1"/>
</dbReference>
<dbReference type="Pfam" id="PF02542">
    <property type="entry name" value="YgbB"/>
    <property type="match status" value="1"/>
</dbReference>
<dbReference type="SUPFAM" id="SSF69765">
    <property type="entry name" value="IpsF-like"/>
    <property type="match status" value="1"/>
</dbReference>
<dbReference type="PROSITE" id="PS01350">
    <property type="entry name" value="ISPF"/>
    <property type="match status" value="1"/>
</dbReference>
<keyword id="KW-0414">Isoprene biosynthesis</keyword>
<keyword id="KW-0456">Lyase</keyword>
<keyword id="KW-0479">Metal-binding</keyword>
<accession>Q0HL69</accession>
<gene>
    <name evidence="1" type="primary">ispF</name>
    <name type="ordered locus">Shewmr4_1118</name>
</gene>
<reference key="1">
    <citation type="submission" date="2006-08" db="EMBL/GenBank/DDBJ databases">
        <title>Complete sequence of Shewanella sp. MR-4.</title>
        <authorList>
            <consortium name="US DOE Joint Genome Institute"/>
            <person name="Copeland A."/>
            <person name="Lucas S."/>
            <person name="Lapidus A."/>
            <person name="Barry K."/>
            <person name="Detter J.C."/>
            <person name="Glavina del Rio T."/>
            <person name="Hammon N."/>
            <person name="Israni S."/>
            <person name="Dalin E."/>
            <person name="Tice H."/>
            <person name="Pitluck S."/>
            <person name="Kiss H."/>
            <person name="Brettin T."/>
            <person name="Bruce D."/>
            <person name="Han C."/>
            <person name="Tapia R."/>
            <person name="Gilna P."/>
            <person name="Schmutz J."/>
            <person name="Larimer F."/>
            <person name="Land M."/>
            <person name="Hauser L."/>
            <person name="Kyrpides N."/>
            <person name="Mikhailova N."/>
            <person name="Nealson K."/>
            <person name="Konstantinidis K."/>
            <person name="Klappenbach J."/>
            <person name="Tiedje J."/>
            <person name="Richardson P."/>
        </authorList>
    </citation>
    <scope>NUCLEOTIDE SEQUENCE [LARGE SCALE GENOMIC DNA]</scope>
    <source>
        <strain>MR-4</strain>
    </source>
</reference>
<evidence type="ECO:0000255" key="1">
    <source>
        <dbReference type="HAMAP-Rule" id="MF_00107"/>
    </source>
</evidence>